<comment type="function">
    <text evidence="1">Condenses 4-methyl-5-(beta-hydroxyethyl)thiazole monophosphate (THZ-P) and 2-methyl-4-amino-5-hydroxymethyl pyrimidine pyrophosphate (HMP-PP) to form thiamine monophosphate (TMP).</text>
</comment>
<comment type="catalytic activity">
    <reaction evidence="1">
        <text>2-[(2R,5Z)-2-carboxy-4-methylthiazol-5(2H)-ylidene]ethyl phosphate + 4-amino-2-methyl-5-(diphosphooxymethyl)pyrimidine + 2 H(+) = thiamine phosphate + CO2 + diphosphate</text>
        <dbReference type="Rhea" id="RHEA:47844"/>
        <dbReference type="ChEBI" id="CHEBI:15378"/>
        <dbReference type="ChEBI" id="CHEBI:16526"/>
        <dbReference type="ChEBI" id="CHEBI:33019"/>
        <dbReference type="ChEBI" id="CHEBI:37575"/>
        <dbReference type="ChEBI" id="CHEBI:57841"/>
        <dbReference type="ChEBI" id="CHEBI:62899"/>
        <dbReference type="EC" id="2.5.1.3"/>
    </reaction>
</comment>
<comment type="catalytic activity">
    <reaction evidence="1">
        <text>2-(2-carboxy-4-methylthiazol-5-yl)ethyl phosphate + 4-amino-2-methyl-5-(diphosphooxymethyl)pyrimidine + 2 H(+) = thiamine phosphate + CO2 + diphosphate</text>
        <dbReference type="Rhea" id="RHEA:47848"/>
        <dbReference type="ChEBI" id="CHEBI:15378"/>
        <dbReference type="ChEBI" id="CHEBI:16526"/>
        <dbReference type="ChEBI" id="CHEBI:33019"/>
        <dbReference type="ChEBI" id="CHEBI:37575"/>
        <dbReference type="ChEBI" id="CHEBI:57841"/>
        <dbReference type="ChEBI" id="CHEBI:62890"/>
        <dbReference type="EC" id="2.5.1.3"/>
    </reaction>
</comment>
<comment type="catalytic activity">
    <reaction evidence="1">
        <text>4-methyl-5-(2-phosphooxyethyl)-thiazole + 4-amino-2-methyl-5-(diphosphooxymethyl)pyrimidine + H(+) = thiamine phosphate + diphosphate</text>
        <dbReference type="Rhea" id="RHEA:22328"/>
        <dbReference type="ChEBI" id="CHEBI:15378"/>
        <dbReference type="ChEBI" id="CHEBI:33019"/>
        <dbReference type="ChEBI" id="CHEBI:37575"/>
        <dbReference type="ChEBI" id="CHEBI:57841"/>
        <dbReference type="ChEBI" id="CHEBI:58296"/>
        <dbReference type="EC" id="2.5.1.3"/>
    </reaction>
</comment>
<comment type="cofactor">
    <cofactor evidence="1">
        <name>Mg(2+)</name>
        <dbReference type="ChEBI" id="CHEBI:18420"/>
    </cofactor>
    <text evidence="1">Binds 1 Mg(2+) ion per subunit.</text>
</comment>
<comment type="pathway">
    <text evidence="1">Cofactor biosynthesis; thiamine diphosphate biosynthesis; thiamine phosphate from 4-amino-2-methyl-5-diphosphomethylpyrimidine and 4-methyl-5-(2-phosphoethyl)-thiazole: step 1/1.</text>
</comment>
<comment type="similarity">
    <text evidence="1">Belongs to the thiamine-phosphate synthase family.</text>
</comment>
<feature type="chain" id="PRO_1000093664" description="Thiamine-phosphate synthase">
    <location>
        <begin position="1"/>
        <end position="213"/>
    </location>
</feature>
<feature type="binding site" evidence="1">
    <location>
        <begin position="39"/>
        <end position="43"/>
    </location>
    <ligand>
        <name>4-amino-2-methyl-5-(diphosphooxymethyl)pyrimidine</name>
        <dbReference type="ChEBI" id="CHEBI:57841"/>
    </ligand>
</feature>
<feature type="binding site" evidence="1">
    <location>
        <position position="71"/>
    </location>
    <ligand>
        <name>4-amino-2-methyl-5-(diphosphooxymethyl)pyrimidine</name>
        <dbReference type="ChEBI" id="CHEBI:57841"/>
    </ligand>
</feature>
<feature type="binding site" evidence="1">
    <location>
        <position position="72"/>
    </location>
    <ligand>
        <name>Mg(2+)</name>
        <dbReference type="ChEBI" id="CHEBI:18420"/>
    </ligand>
</feature>
<feature type="binding site" evidence="1">
    <location>
        <position position="91"/>
    </location>
    <ligand>
        <name>Mg(2+)</name>
        <dbReference type="ChEBI" id="CHEBI:18420"/>
    </ligand>
</feature>
<feature type="binding site" evidence="1">
    <location>
        <position position="110"/>
    </location>
    <ligand>
        <name>4-amino-2-methyl-5-(diphosphooxymethyl)pyrimidine</name>
        <dbReference type="ChEBI" id="CHEBI:57841"/>
    </ligand>
</feature>
<feature type="binding site" evidence="1">
    <location>
        <begin position="136"/>
        <end position="138"/>
    </location>
    <ligand>
        <name>2-[(2R,5Z)-2-carboxy-4-methylthiazol-5(2H)-ylidene]ethyl phosphate</name>
        <dbReference type="ChEBI" id="CHEBI:62899"/>
    </ligand>
</feature>
<feature type="binding site" evidence="1">
    <location>
        <position position="139"/>
    </location>
    <ligand>
        <name>4-amino-2-methyl-5-(diphosphooxymethyl)pyrimidine</name>
        <dbReference type="ChEBI" id="CHEBI:57841"/>
    </ligand>
</feature>
<feature type="binding site" evidence="1">
    <location>
        <position position="166"/>
    </location>
    <ligand>
        <name>2-[(2R,5Z)-2-carboxy-4-methylthiazol-5(2H)-ylidene]ethyl phosphate</name>
        <dbReference type="ChEBI" id="CHEBI:62899"/>
    </ligand>
</feature>
<feature type="binding site" evidence="1">
    <location>
        <begin position="186"/>
        <end position="187"/>
    </location>
    <ligand>
        <name>2-[(2R,5Z)-2-carboxy-4-methylthiazol-5(2H)-ylidene]ethyl phosphate</name>
        <dbReference type="ChEBI" id="CHEBI:62899"/>
    </ligand>
</feature>
<proteinExistence type="inferred from homology"/>
<gene>
    <name evidence="1" type="primary">thiE</name>
    <name type="ordered locus">CLL_A3104</name>
</gene>
<reference key="1">
    <citation type="submission" date="2008-04" db="EMBL/GenBank/DDBJ databases">
        <title>Complete sequence of Clostridium botulinum strain Eklund.</title>
        <authorList>
            <person name="Brinkac L.M."/>
            <person name="Brown J.L."/>
            <person name="Bruce D."/>
            <person name="Detter C."/>
            <person name="Munk C."/>
            <person name="Smith L.A."/>
            <person name="Smith T.J."/>
            <person name="Sutton G."/>
            <person name="Brettin T.S."/>
        </authorList>
    </citation>
    <scope>NUCLEOTIDE SEQUENCE [LARGE SCALE GENOMIC DNA]</scope>
    <source>
        <strain>Eklund 17B / Type B</strain>
    </source>
</reference>
<dbReference type="EC" id="2.5.1.3" evidence="1"/>
<dbReference type="EMBL" id="CP001056">
    <property type="protein sequence ID" value="ACD22548.1"/>
    <property type="molecule type" value="Genomic_DNA"/>
</dbReference>
<dbReference type="SMR" id="B2TQ13"/>
<dbReference type="KEGG" id="cbk:CLL_A3104"/>
<dbReference type="PATRIC" id="fig|935198.13.peg.3068"/>
<dbReference type="HOGENOM" id="CLU_018272_3_2_9"/>
<dbReference type="UniPathway" id="UPA00060">
    <property type="reaction ID" value="UER00141"/>
</dbReference>
<dbReference type="Proteomes" id="UP000001195">
    <property type="component" value="Chromosome"/>
</dbReference>
<dbReference type="GO" id="GO:0005737">
    <property type="term" value="C:cytoplasm"/>
    <property type="evidence" value="ECO:0007669"/>
    <property type="project" value="TreeGrafter"/>
</dbReference>
<dbReference type="GO" id="GO:0000287">
    <property type="term" value="F:magnesium ion binding"/>
    <property type="evidence" value="ECO:0007669"/>
    <property type="project" value="UniProtKB-UniRule"/>
</dbReference>
<dbReference type="GO" id="GO:0004789">
    <property type="term" value="F:thiamine-phosphate diphosphorylase activity"/>
    <property type="evidence" value="ECO:0007669"/>
    <property type="project" value="UniProtKB-UniRule"/>
</dbReference>
<dbReference type="GO" id="GO:0009228">
    <property type="term" value="P:thiamine biosynthetic process"/>
    <property type="evidence" value="ECO:0007669"/>
    <property type="project" value="UniProtKB-KW"/>
</dbReference>
<dbReference type="GO" id="GO:0009229">
    <property type="term" value="P:thiamine diphosphate biosynthetic process"/>
    <property type="evidence" value="ECO:0007669"/>
    <property type="project" value="UniProtKB-UniRule"/>
</dbReference>
<dbReference type="CDD" id="cd00564">
    <property type="entry name" value="TMP_TenI"/>
    <property type="match status" value="1"/>
</dbReference>
<dbReference type="FunFam" id="3.20.20.70:FF:000096">
    <property type="entry name" value="Thiamine-phosphate synthase"/>
    <property type="match status" value="1"/>
</dbReference>
<dbReference type="Gene3D" id="3.20.20.70">
    <property type="entry name" value="Aldolase class I"/>
    <property type="match status" value="1"/>
</dbReference>
<dbReference type="HAMAP" id="MF_00097">
    <property type="entry name" value="TMP_synthase"/>
    <property type="match status" value="1"/>
</dbReference>
<dbReference type="InterPro" id="IPR013785">
    <property type="entry name" value="Aldolase_TIM"/>
</dbReference>
<dbReference type="InterPro" id="IPR036206">
    <property type="entry name" value="ThiamineP_synth_sf"/>
</dbReference>
<dbReference type="InterPro" id="IPR022998">
    <property type="entry name" value="ThiamineP_synth_TenI"/>
</dbReference>
<dbReference type="InterPro" id="IPR034291">
    <property type="entry name" value="TMP_synthase"/>
</dbReference>
<dbReference type="NCBIfam" id="TIGR00693">
    <property type="entry name" value="thiE"/>
    <property type="match status" value="1"/>
</dbReference>
<dbReference type="PANTHER" id="PTHR20857:SF23">
    <property type="entry name" value="THIAMINE BIOSYNTHETIC BIFUNCTIONAL ENZYME"/>
    <property type="match status" value="1"/>
</dbReference>
<dbReference type="PANTHER" id="PTHR20857">
    <property type="entry name" value="THIAMINE-PHOSPHATE PYROPHOSPHORYLASE"/>
    <property type="match status" value="1"/>
</dbReference>
<dbReference type="Pfam" id="PF02581">
    <property type="entry name" value="TMP-TENI"/>
    <property type="match status" value="1"/>
</dbReference>
<dbReference type="SUPFAM" id="SSF51391">
    <property type="entry name" value="Thiamin phosphate synthase"/>
    <property type="match status" value="1"/>
</dbReference>
<accession>B2TQ13</accession>
<organism>
    <name type="scientific">Clostridium botulinum (strain Eklund 17B / Type B)</name>
    <dbReference type="NCBI Taxonomy" id="935198"/>
    <lineage>
        <taxon>Bacteria</taxon>
        <taxon>Bacillati</taxon>
        <taxon>Bacillota</taxon>
        <taxon>Clostridia</taxon>
        <taxon>Eubacteriales</taxon>
        <taxon>Clostridiaceae</taxon>
        <taxon>Clostridium</taxon>
    </lineage>
</organism>
<protein>
    <recommendedName>
        <fullName evidence="1">Thiamine-phosphate synthase</fullName>
        <shortName evidence="1">TP synthase</shortName>
        <shortName evidence="1">TPS</shortName>
        <ecNumber evidence="1">2.5.1.3</ecNumber>
    </recommendedName>
    <alternativeName>
        <fullName evidence="1">Thiamine-phosphate pyrophosphorylase</fullName>
        <shortName evidence="1">TMP pyrophosphorylase</shortName>
        <shortName evidence="1">TMP-PPase</shortName>
    </alternativeName>
</protein>
<keyword id="KW-0460">Magnesium</keyword>
<keyword id="KW-0479">Metal-binding</keyword>
<keyword id="KW-0784">Thiamine biosynthesis</keyword>
<keyword id="KW-0808">Transferase</keyword>
<name>THIE_CLOBB</name>
<evidence type="ECO:0000255" key="1">
    <source>
        <dbReference type="HAMAP-Rule" id="MF_00097"/>
    </source>
</evidence>
<sequence>MKNKIDYSIYLVTDRDLMSTNTLEEAVEKSILGGTTLVQLREKECSSHDFYETALNVKKITQKYNIPLIINDRVDIALAVDADGIHIGQSDLPATVVRNIIGEDKILGVSAGNLDEALKAQKDGADYIGVGAMYSTGTKKDATSTTMNELREIMKKVSIPVVVIGGINKERIKDFNGINIDGLAIVSAIIAQENIEKSTRELKEEFDKLNTLI</sequence>